<accession>Q7W2S3</accession>
<sequence>MNIPQEVARRRTFAIISHPDAGKTTLTEKLLLFAGAIQIAGSVKARKASRHASSDWMEIEKQRGISVASSVMQMEYRDCVINLLDTPGHQDFSEDTYRVLTAVDAALMVIDAANGVEPQTIRLLQVCRARNTPIITFINKLDREVREPLELLSEIEGHLGMDTVPFSWPVGMGKAFGGVFDIRRNRMRIFRAGQERRGEDDEFIDGLDNPEIPRRFGAAFAQASGEIELINEAAPAFDREAFLAGKQTPVFFGSAINNFGVQEVLDALVDQAPAPGPRQALEREVRPDEPKFTGVVFKVQANMDPAHRDRVAFVRVSSGRFERGMRLKVARTGKEMRPNNVVSFLSQRRELLDEAYASDVIGIPNHGVLQLGDVLTEGESLRFTGLPFFAPELFQAVEVKDPLRTKQLRVGLTQLGEEGAIQVFRPEAAGGALLLGAVGQLQFEVVAHRLKTEYGVDARMMPSRYTSARWITSDDPRALRKFMDANAAHIAYDVVDAAAFLITSPAQLRVAEDLYPNVKFHALREHGGKVFGDKA</sequence>
<feature type="chain" id="PRO_0000210931" description="Peptide chain release factor 3">
    <location>
        <begin position="1"/>
        <end position="535"/>
    </location>
</feature>
<feature type="domain" description="tr-type G">
    <location>
        <begin position="8"/>
        <end position="278"/>
    </location>
</feature>
<feature type="binding site" evidence="1">
    <location>
        <begin position="17"/>
        <end position="24"/>
    </location>
    <ligand>
        <name>GTP</name>
        <dbReference type="ChEBI" id="CHEBI:37565"/>
    </ligand>
</feature>
<feature type="binding site" evidence="1">
    <location>
        <begin position="85"/>
        <end position="89"/>
    </location>
    <ligand>
        <name>GTP</name>
        <dbReference type="ChEBI" id="CHEBI:37565"/>
    </ligand>
</feature>
<feature type="binding site" evidence="1">
    <location>
        <begin position="139"/>
        <end position="142"/>
    </location>
    <ligand>
        <name>GTP</name>
        <dbReference type="ChEBI" id="CHEBI:37565"/>
    </ligand>
</feature>
<keyword id="KW-0963">Cytoplasm</keyword>
<keyword id="KW-0342">GTP-binding</keyword>
<keyword id="KW-0547">Nucleotide-binding</keyword>
<keyword id="KW-0648">Protein biosynthesis</keyword>
<name>RF3_BORPA</name>
<reference key="1">
    <citation type="journal article" date="2003" name="Nat. Genet.">
        <title>Comparative analysis of the genome sequences of Bordetella pertussis, Bordetella parapertussis and Bordetella bronchiseptica.</title>
        <authorList>
            <person name="Parkhill J."/>
            <person name="Sebaihia M."/>
            <person name="Preston A."/>
            <person name="Murphy L.D."/>
            <person name="Thomson N.R."/>
            <person name="Harris D.E."/>
            <person name="Holden M.T.G."/>
            <person name="Churcher C.M."/>
            <person name="Bentley S.D."/>
            <person name="Mungall K.L."/>
            <person name="Cerdeno-Tarraga A.-M."/>
            <person name="Temple L."/>
            <person name="James K.D."/>
            <person name="Harris B."/>
            <person name="Quail M.A."/>
            <person name="Achtman M."/>
            <person name="Atkin R."/>
            <person name="Baker S."/>
            <person name="Basham D."/>
            <person name="Bason N."/>
            <person name="Cherevach I."/>
            <person name="Chillingworth T."/>
            <person name="Collins M."/>
            <person name="Cronin A."/>
            <person name="Davis P."/>
            <person name="Doggett J."/>
            <person name="Feltwell T."/>
            <person name="Goble A."/>
            <person name="Hamlin N."/>
            <person name="Hauser H."/>
            <person name="Holroyd S."/>
            <person name="Jagels K."/>
            <person name="Leather S."/>
            <person name="Moule S."/>
            <person name="Norberczak H."/>
            <person name="O'Neil S."/>
            <person name="Ormond D."/>
            <person name="Price C."/>
            <person name="Rabbinowitsch E."/>
            <person name="Rutter S."/>
            <person name="Sanders M."/>
            <person name="Saunders D."/>
            <person name="Seeger K."/>
            <person name="Sharp S."/>
            <person name="Simmonds M."/>
            <person name="Skelton J."/>
            <person name="Squares R."/>
            <person name="Squares S."/>
            <person name="Stevens K."/>
            <person name="Unwin L."/>
            <person name="Whitehead S."/>
            <person name="Barrell B.G."/>
            <person name="Maskell D.J."/>
        </authorList>
    </citation>
    <scope>NUCLEOTIDE SEQUENCE [LARGE SCALE GENOMIC DNA]</scope>
    <source>
        <strain>12822 / ATCC BAA-587 / NCTC 13253</strain>
    </source>
</reference>
<gene>
    <name evidence="1" type="primary">prfC</name>
    <name type="ordered locus">BPP4330</name>
</gene>
<proteinExistence type="inferred from homology"/>
<evidence type="ECO:0000255" key="1">
    <source>
        <dbReference type="HAMAP-Rule" id="MF_00072"/>
    </source>
</evidence>
<protein>
    <recommendedName>
        <fullName evidence="1">Peptide chain release factor 3</fullName>
        <shortName evidence="1">RF-3</shortName>
    </recommendedName>
</protein>
<organism>
    <name type="scientific">Bordetella parapertussis (strain 12822 / ATCC BAA-587 / NCTC 13253)</name>
    <dbReference type="NCBI Taxonomy" id="257311"/>
    <lineage>
        <taxon>Bacteria</taxon>
        <taxon>Pseudomonadati</taxon>
        <taxon>Pseudomonadota</taxon>
        <taxon>Betaproteobacteria</taxon>
        <taxon>Burkholderiales</taxon>
        <taxon>Alcaligenaceae</taxon>
        <taxon>Bordetella</taxon>
    </lineage>
</organism>
<dbReference type="EMBL" id="BX640436">
    <property type="protein sequence ID" value="CAE39609.1"/>
    <property type="molecule type" value="Genomic_DNA"/>
</dbReference>
<dbReference type="RefSeq" id="WP_010929509.1">
    <property type="nucleotide sequence ID" value="NC_002928.3"/>
</dbReference>
<dbReference type="SMR" id="Q7W2S3"/>
<dbReference type="GeneID" id="93206130"/>
<dbReference type="KEGG" id="bpa:BPP4330"/>
<dbReference type="HOGENOM" id="CLU_002794_2_1_4"/>
<dbReference type="Proteomes" id="UP000001421">
    <property type="component" value="Chromosome"/>
</dbReference>
<dbReference type="GO" id="GO:0005829">
    <property type="term" value="C:cytosol"/>
    <property type="evidence" value="ECO:0007669"/>
    <property type="project" value="TreeGrafter"/>
</dbReference>
<dbReference type="GO" id="GO:0005525">
    <property type="term" value="F:GTP binding"/>
    <property type="evidence" value="ECO:0007669"/>
    <property type="project" value="UniProtKB-UniRule"/>
</dbReference>
<dbReference type="GO" id="GO:0003924">
    <property type="term" value="F:GTPase activity"/>
    <property type="evidence" value="ECO:0007669"/>
    <property type="project" value="InterPro"/>
</dbReference>
<dbReference type="GO" id="GO:0016150">
    <property type="term" value="F:translation release factor activity, codon nonspecific"/>
    <property type="evidence" value="ECO:0007669"/>
    <property type="project" value="TreeGrafter"/>
</dbReference>
<dbReference type="GO" id="GO:0016149">
    <property type="term" value="F:translation release factor activity, codon specific"/>
    <property type="evidence" value="ECO:0007669"/>
    <property type="project" value="UniProtKB-UniRule"/>
</dbReference>
<dbReference type="GO" id="GO:0006449">
    <property type="term" value="P:regulation of translational termination"/>
    <property type="evidence" value="ECO:0007669"/>
    <property type="project" value="UniProtKB-UniRule"/>
</dbReference>
<dbReference type="CDD" id="cd04169">
    <property type="entry name" value="RF3"/>
    <property type="match status" value="1"/>
</dbReference>
<dbReference type="FunFam" id="3.30.70.3280:FF:000001">
    <property type="entry name" value="Peptide chain release factor 3"/>
    <property type="match status" value="1"/>
</dbReference>
<dbReference type="FunFam" id="3.40.50.300:FF:000542">
    <property type="entry name" value="Peptide chain release factor 3"/>
    <property type="match status" value="1"/>
</dbReference>
<dbReference type="Gene3D" id="3.40.50.300">
    <property type="entry name" value="P-loop containing nucleotide triphosphate hydrolases"/>
    <property type="match status" value="2"/>
</dbReference>
<dbReference type="Gene3D" id="3.30.70.3280">
    <property type="entry name" value="Peptide chain release factor 3, domain III"/>
    <property type="match status" value="1"/>
</dbReference>
<dbReference type="HAMAP" id="MF_00072">
    <property type="entry name" value="Rel_fac_3"/>
    <property type="match status" value="1"/>
</dbReference>
<dbReference type="InterPro" id="IPR053905">
    <property type="entry name" value="EF-G-like_DII"/>
</dbReference>
<dbReference type="InterPro" id="IPR035647">
    <property type="entry name" value="EFG_III/V"/>
</dbReference>
<dbReference type="InterPro" id="IPR031157">
    <property type="entry name" value="G_TR_CS"/>
</dbReference>
<dbReference type="InterPro" id="IPR027417">
    <property type="entry name" value="P-loop_NTPase"/>
</dbReference>
<dbReference type="InterPro" id="IPR004548">
    <property type="entry name" value="PrfC"/>
</dbReference>
<dbReference type="InterPro" id="IPR032090">
    <property type="entry name" value="RF3_C"/>
</dbReference>
<dbReference type="InterPro" id="IPR038467">
    <property type="entry name" value="RF3_dom_3_sf"/>
</dbReference>
<dbReference type="InterPro" id="IPR041732">
    <property type="entry name" value="RF3_GTP-bd"/>
</dbReference>
<dbReference type="InterPro" id="IPR005225">
    <property type="entry name" value="Small_GTP-bd"/>
</dbReference>
<dbReference type="InterPro" id="IPR000795">
    <property type="entry name" value="T_Tr_GTP-bd_dom"/>
</dbReference>
<dbReference type="InterPro" id="IPR009000">
    <property type="entry name" value="Transl_B-barrel_sf"/>
</dbReference>
<dbReference type="NCBIfam" id="TIGR00503">
    <property type="entry name" value="prfC"/>
    <property type="match status" value="1"/>
</dbReference>
<dbReference type="NCBIfam" id="NF001964">
    <property type="entry name" value="PRK00741.1"/>
    <property type="match status" value="1"/>
</dbReference>
<dbReference type="NCBIfam" id="TIGR00231">
    <property type="entry name" value="small_GTP"/>
    <property type="match status" value="1"/>
</dbReference>
<dbReference type="PANTHER" id="PTHR43556">
    <property type="entry name" value="PEPTIDE CHAIN RELEASE FACTOR RF3"/>
    <property type="match status" value="1"/>
</dbReference>
<dbReference type="PANTHER" id="PTHR43556:SF2">
    <property type="entry name" value="PEPTIDE CHAIN RELEASE FACTOR RF3"/>
    <property type="match status" value="1"/>
</dbReference>
<dbReference type="Pfam" id="PF22042">
    <property type="entry name" value="EF-G_D2"/>
    <property type="match status" value="1"/>
</dbReference>
<dbReference type="Pfam" id="PF00009">
    <property type="entry name" value="GTP_EFTU"/>
    <property type="match status" value="1"/>
</dbReference>
<dbReference type="Pfam" id="PF16658">
    <property type="entry name" value="RF3_C"/>
    <property type="match status" value="1"/>
</dbReference>
<dbReference type="PRINTS" id="PR00315">
    <property type="entry name" value="ELONGATNFCT"/>
</dbReference>
<dbReference type="SUPFAM" id="SSF54980">
    <property type="entry name" value="EF-G C-terminal domain-like"/>
    <property type="match status" value="1"/>
</dbReference>
<dbReference type="SUPFAM" id="SSF52540">
    <property type="entry name" value="P-loop containing nucleoside triphosphate hydrolases"/>
    <property type="match status" value="1"/>
</dbReference>
<dbReference type="SUPFAM" id="SSF50447">
    <property type="entry name" value="Translation proteins"/>
    <property type="match status" value="1"/>
</dbReference>
<dbReference type="PROSITE" id="PS00301">
    <property type="entry name" value="G_TR_1"/>
    <property type="match status" value="1"/>
</dbReference>
<dbReference type="PROSITE" id="PS51722">
    <property type="entry name" value="G_TR_2"/>
    <property type="match status" value="1"/>
</dbReference>
<comment type="function">
    <text evidence="1">Increases the formation of ribosomal termination complexes and stimulates activities of RF-1 and RF-2. It binds guanine nucleotides and has strong preference for UGA stop codons. It may interact directly with the ribosome. The stimulation of RF-1 and RF-2 is significantly reduced by GTP and GDP, but not by GMP.</text>
</comment>
<comment type="subcellular location">
    <subcellularLocation>
        <location evidence="1">Cytoplasm</location>
    </subcellularLocation>
</comment>
<comment type="similarity">
    <text evidence="1">Belongs to the TRAFAC class translation factor GTPase superfamily. Classic translation factor GTPase family. PrfC subfamily.</text>
</comment>